<protein>
    <recommendedName>
        <fullName evidence="1">4-hydroxy-tetrahydrodipicolinate synthase</fullName>
        <shortName evidence="1">HTPA synthase</shortName>
        <ecNumber evidence="1">4.3.3.7</ecNumber>
    </recommendedName>
</protein>
<name>DAPA_STUS1</name>
<accession>A4VN86</accession>
<evidence type="ECO:0000255" key="1">
    <source>
        <dbReference type="HAMAP-Rule" id="MF_00418"/>
    </source>
</evidence>
<evidence type="ECO:0000305" key="2"/>
<keyword id="KW-0028">Amino-acid biosynthesis</keyword>
<keyword id="KW-0963">Cytoplasm</keyword>
<keyword id="KW-0220">Diaminopimelate biosynthesis</keyword>
<keyword id="KW-0456">Lyase</keyword>
<keyword id="KW-0457">Lysine biosynthesis</keyword>
<keyword id="KW-1185">Reference proteome</keyword>
<keyword id="KW-0704">Schiff base</keyword>
<organism>
    <name type="scientific">Stutzerimonas stutzeri (strain A1501)</name>
    <name type="common">Pseudomonas stutzeri</name>
    <dbReference type="NCBI Taxonomy" id="379731"/>
    <lineage>
        <taxon>Bacteria</taxon>
        <taxon>Pseudomonadati</taxon>
        <taxon>Pseudomonadota</taxon>
        <taxon>Gammaproteobacteria</taxon>
        <taxon>Pseudomonadales</taxon>
        <taxon>Pseudomonadaceae</taxon>
        <taxon>Stutzerimonas</taxon>
    </lineage>
</organism>
<comment type="function">
    <text evidence="1">Catalyzes the condensation of (S)-aspartate-beta-semialdehyde [(S)-ASA] and pyruvate to 4-hydroxy-tetrahydrodipicolinate (HTPA).</text>
</comment>
<comment type="catalytic activity">
    <reaction evidence="1">
        <text>L-aspartate 4-semialdehyde + pyruvate = (2S,4S)-4-hydroxy-2,3,4,5-tetrahydrodipicolinate + H2O + H(+)</text>
        <dbReference type="Rhea" id="RHEA:34171"/>
        <dbReference type="ChEBI" id="CHEBI:15361"/>
        <dbReference type="ChEBI" id="CHEBI:15377"/>
        <dbReference type="ChEBI" id="CHEBI:15378"/>
        <dbReference type="ChEBI" id="CHEBI:67139"/>
        <dbReference type="ChEBI" id="CHEBI:537519"/>
        <dbReference type="EC" id="4.3.3.7"/>
    </reaction>
</comment>
<comment type="pathway">
    <text evidence="1">Amino-acid biosynthesis; L-lysine biosynthesis via DAP pathway; (S)-tetrahydrodipicolinate from L-aspartate: step 3/4.</text>
</comment>
<comment type="subunit">
    <text evidence="1">Homodimer.</text>
</comment>
<comment type="subcellular location">
    <subcellularLocation>
        <location evidence="1">Cytoplasm</location>
    </subcellularLocation>
</comment>
<comment type="similarity">
    <text evidence="1">Belongs to the DapA family.</text>
</comment>
<comment type="caution">
    <text evidence="2">Was originally thought to be a dihydrodipicolinate synthase (DHDPS), catalyzing the condensation of (S)-aspartate-beta-semialdehyde [(S)-ASA] and pyruvate to dihydrodipicolinate (DHDP). However, it was shown in E.coli that the product of the enzymatic reaction is not dihydrodipicolinate but in fact (4S)-4-hydroxy-2,3,4,5-tetrahydro-(2S)-dipicolinic acid (HTPA), and that the consecutive dehydration reaction leading to DHDP is not spontaneous but catalyzed by DapB.</text>
</comment>
<dbReference type="EC" id="4.3.3.7" evidence="1"/>
<dbReference type="EMBL" id="CP000304">
    <property type="protein sequence ID" value="ABP80437.1"/>
    <property type="molecule type" value="Genomic_DNA"/>
</dbReference>
<dbReference type="RefSeq" id="WP_011913894.1">
    <property type="nucleotide sequence ID" value="NC_009434.1"/>
</dbReference>
<dbReference type="SMR" id="A4VN86"/>
<dbReference type="KEGG" id="psa:PST_2790"/>
<dbReference type="eggNOG" id="COG0329">
    <property type="taxonomic scope" value="Bacteria"/>
</dbReference>
<dbReference type="HOGENOM" id="CLU_049343_7_1_6"/>
<dbReference type="UniPathway" id="UPA00034">
    <property type="reaction ID" value="UER00017"/>
</dbReference>
<dbReference type="Proteomes" id="UP000000233">
    <property type="component" value="Chromosome"/>
</dbReference>
<dbReference type="GO" id="GO:0005829">
    <property type="term" value="C:cytosol"/>
    <property type="evidence" value="ECO:0007669"/>
    <property type="project" value="TreeGrafter"/>
</dbReference>
<dbReference type="GO" id="GO:0008840">
    <property type="term" value="F:4-hydroxy-tetrahydrodipicolinate synthase activity"/>
    <property type="evidence" value="ECO:0007669"/>
    <property type="project" value="UniProtKB-UniRule"/>
</dbReference>
<dbReference type="GO" id="GO:0019877">
    <property type="term" value="P:diaminopimelate biosynthetic process"/>
    <property type="evidence" value="ECO:0007669"/>
    <property type="project" value="UniProtKB-UniRule"/>
</dbReference>
<dbReference type="GO" id="GO:0009089">
    <property type="term" value="P:lysine biosynthetic process via diaminopimelate"/>
    <property type="evidence" value="ECO:0007669"/>
    <property type="project" value="UniProtKB-UniRule"/>
</dbReference>
<dbReference type="CDD" id="cd00950">
    <property type="entry name" value="DHDPS"/>
    <property type="match status" value="1"/>
</dbReference>
<dbReference type="Gene3D" id="3.20.20.70">
    <property type="entry name" value="Aldolase class I"/>
    <property type="match status" value="1"/>
</dbReference>
<dbReference type="HAMAP" id="MF_00418">
    <property type="entry name" value="DapA"/>
    <property type="match status" value="1"/>
</dbReference>
<dbReference type="InterPro" id="IPR013785">
    <property type="entry name" value="Aldolase_TIM"/>
</dbReference>
<dbReference type="InterPro" id="IPR005263">
    <property type="entry name" value="DapA"/>
</dbReference>
<dbReference type="InterPro" id="IPR002220">
    <property type="entry name" value="DapA-like"/>
</dbReference>
<dbReference type="InterPro" id="IPR020625">
    <property type="entry name" value="Schiff_base-form_aldolases_AS"/>
</dbReference>
<dbReference type="InterPro" id="IPR020624">
    <property type="entry name" value="Schiff_base-form_aldolases_CS"/>
</dbReference>
<dbReference type="NCBIfam" id="TIGR00674">
    <property type="entry name" value="dapA"/>
    <property type="match status" value="1"/>
</dbReference>
<dbReference type="PANTHER" id="PTHR12128:SF66">
    <property type="entry name" value="4-HYDROXY-2-OXOGLUTARATE ALDOLASE, MITOCHONDRIAL"/>
    <property type="match status" value="1"/>
</dbReference>
<dbReference type="PANTHER" id="PTHR12128">
    <property type="entry name" value="DIHYDRODIPICOLINATE SYNTHASE"/>
    <property type="match status" value="1"/>
</dbReference>
<dbReference type="Pfam" id="PF00701">
    <property type="entry name" value="DHDPS"/>
    <property type="match status" value="1"/>
</dbReference>
<dbReference type="PIRSF" id="PIRSF001365">
    <property type="entry name" value="DHDPS"/>
    <property type="match status" value="1"/>
</dbReference>
<dbReference type="PRINTS" id="PR00146">
    <property type="entry name" value="DHPICSNTHASE"/>
</dbReference>
<dbReference type="SMART" id="SM01130">
    <property type="entry name" value="DHDPS"/>
    <property type="match status" value="1"/>
</dbReference>
<dbReference type="SUPFAM" id="SSF51569">
    <property type="entry name" value="Aldolase"/>
    <property type="match status" value="1"/>
</dbReference>
<dbReference type="PROSITE" id="PS00665">
    <property type="entry name" value="DHDPS_1"/>
    <property type="match status" value="1"/>
</dbReference>
<dbReference type="PROSITE" id="PS00666">
    <property type="entry name" value="DHDPS_2"/>
    <property type="match status" value="1"/>
</dbReference>
<feature type="chain" id="PRO_1000050250" description="4-hydroxy-tetrahydrodipicolinate synthase">
    <location>
        <begin position="1"/>
        <end position="292"/>
    </location>
</feature>
<feature type="active site" description="Proton donor/acceptor" evidence="1">
    <location>
        <position position="133"/>
    </location>
</feature>
<feature type="active site" description="Schiff-base intermediate with substrate" evidence="1">
    <location>
        <position position="161"/>
    </location>
</feature>
<feature type="binding site" evidence="1">
    <location>
        <position position="45"/>
    </location>
    <ligand>
        <name>pyruvate</name>
        <dbReference type="ChEBI" id="CHEBI:15361"/>
    </ligand>
</feature>
<feature type="binding site" evidence="1">
    <location>
        <position position="203"/>
    </location>
    <ligand>
        <name>pyruvate</name>
        <dbReference type="ChEBI" id="CHEBI:15361"/>
    </ligand>
</feature>
<feature type="site" description="Part of a proton relay during catalysis" evidence="1">
    <location>
        <position position="44"/>
    </location>
</feature>
<feature type="site" description="Part of a proton relay during catalysis" evidence="1">
    <location>
        <position position="107"/>
    </location>
</feature>
<gene>
    <name evidence="1" type="primary">dapA</name>
    <name type="ordered locus">PST_2790</name>
</gene>
<sequence>MIAGSMVALVTPMDAQGGLDWDSLSKLVDFHLQEGTNAIVAVGTTGESATLSVAEHIEVIRRVVDQVNGRIPVIAGTGANSTSEAVELTENAKTAGADACLLVTPYYNKPTQEGLYLHFKHIAEAVAIPQILYNVPGRTVCDMLPDTVERLSKVPNIIGIKEATGDLKRGREVLDRVSTDFLVYSGDDPTAVELMLMGGKGNISVTANVAPRAMSELCAAAMAGDAETARAINERLMPLHRALFLEANPIPVKWALHEMGLMGNGIRLPLTWLSQSYQEPLRQAMRQTGVLA</sequence>
<proteinExistence type="inferred from homology"/>
<reference key="1">
    <citation type="journal article" date="2008" name="Proc. Natl. Acad. Sci. U.S.A.">
        <title>Nitrogen fixation island and rhizosphere competence traits in the genome of root-associated Pseudomonas stutzeri A1501.</title>
        <authorList>
            <person name="Yan Y."/>
            <person name="Yang J."/>
            <person name="Dou Y."/>
            <person name="Chen M."/>
            <person name="Ping S."/>
            <person name="Peng J."/>
            <person name="Lu W."/>
            <person name="Zhang W."/>
            <person name="Yao Z."/>
            <person name="Li H."/>
            <person name="Liu W."/>
            <person name="He S."/>
            <person name="Geng L."/>
            <person name="Zhang X."/>
            <person name="Yang F."/>
            <person name="Yu H."/>
            <person name="Zhan Y."/>
            <person name="Li D."/>
            <person name="Lin Z."/>
            <person name="Wang Y."/>
            <person name="Elmerich C."/>
            <person name="Lin M."/>
            <person name="Jin Q."/>
        </authorList>
    </citation>
    <scope>NUCLEOTIDE SEQUENCE [LARGE SCALE GENOMIC DNA]</scope>
    <source>
        <strain>A1501</strain>
    </source>
</reference>